<protein>
    <recommendedName>
        <fullName evidence="1">Large ribosomal subunit protein bL21</fullName>
    </recommendedName>
    <alternativeName>
        <fullName evidence="2">50S ribosomal protein L21</fullName>
    </alternativeName>
</protein>
<gene>
    <name evidence="1" type="primary">rplU</name>
    <name type="ordered locus">amb4077</name>
</gene>
<proteinExistence type="inferred from homology"/>
<keyword id="KW-0687">Ribonucleoprotein</keyword>
<keyword id="KW-0689">Ribosomal protein</keyword>
<keyword id="KW-0694">RNA-binding</keyword>
<keyword id="KW-0699">rRNA-binding</keyword>
<sequence length="100" mass="10741">MFAVIQTGGKQYKVASGDVIRVEKLAGEAGAEVVLDQVLMVGDKIGVPVVAGASVKATVVAQARGEKIIVFKKRRRQNSRRKNGHRQDLTILRITDISAG</sequence>
<feature type="chain" id="PRO_0000270683" description="Large ribosomal subunit protein bL21">
    <location>
        <begin position="1"/>
        <end position="100"/>
    </location>
</feature>
<accession>Q2VZU4</accession>
<name>RL21_PARM1</name>
<organism>
    <name type="scientific">Paramagnetospirillum magneticum (strain ATCC 700264 / AMB-1)</name>
    <name type="common">Magnetospirillum magneticum</name>
    <dbReference type="NCBI Taxonomy" id="342108"/>
    <lineage>
        <taxon>Bacteria</taxon>
        <taxon>Pseudomonadati</taxon>
        <taxon>Pseudomonadota</taxon>
        <taxon>Alphaproteobacteria</taxon>
        <taxon>Rhodospirillales</taxon>
        <taxon>Magnetospirillaceae</taxon>
        <taxon>Paramagnetospirillum</taxon>
    </lineage>
</organism>
<comment type="function">
    <text evidence="1">This protein binds to 23S rRNA in the presence of protein L20.</text>
</comment>
<comment type="subunit">
    <text evidence="1">Part of the 50S ribosomal subunit. Contacts protein L20.</text>
</comment>
<comment type="similarity">
    <text evidence="1">Belongs to the bacterial ribosomal protein bL21 family.</text>
</comment>
<dbReference type="EMBL" id="AP007255">
    <property type="protein sequence ID" value="BAE52881.1"/>
    <property type="molecule type" value="Genomic_DNA"/>
</dbReference>
<dbReference type="RefSeq" id="WP_011386428.1">
    <property type="nucleotide sequence ID" value="NC_007626.1"/>
</dbReference>
<dbReference type="SMR" id="Q2VZU4"/>
<dbReference type="STRING" id="342108.amb4077"/>
<dbReference type="KEGG" id="mag:amb4077"/>
<dbReference type="HOGENOM" id="CLU_061463_3_2_5"/>
<dbReference type="OrthoDB" id="9813334at2"/>
<dbReference type="Proteomes" id="UP000007058">
    <property type="component" value="Chromosome"/>
</dbReference>
<dbReference type="GO" id="GO:0005737">
    <property type="term" value="C:cytoplasm"/>
    <property type="evidence" value="ECO:0007669"/>
    <property type="project" value="UniProtKB-ARBA"/>
</dbReference>
<dbReference type="GO" id="GO:1990904">
    <property type="term" value="C:ribonucleoprotein complex"/>
    <property type="evidence" value="ECO:0007669"/>
    <property type="project" value="UniProtKB-KW"/>
</dbReference>
<dbReference type="GO" id="GO:0005840">
    <property type="term" value="C:ribosome"/>
    <property type="evidence" value="ECO:0007669"/>
    <property type="project" value="UniProtKB-KW"/>
</dbReference>
<dbReference type="GO" id="GO:0019843">
    <property type="term" value="F:rRNA binding"/>
    <property type="evidence" value="ECO:0007669"/>
    <property type="project" value="UniProtKB-UniRule"/>
</dbReference>
<dbReference type="GO" id="GO:0003735">
    <property type="term" value="F:structural constituent of ribosome"/>
    <property type="evidence" value="ECO:0007669"/>
    <property type="project" value="InterPro"/>
</dbReference>
<dbReference type="GO" id="GO:0006412">
    <property type="term" value="P:translation"/>
    <property type="evidence" value="ECO:0007669"/>
    <property type="project" value="UniProtKB-UniRule"/>
</dbReference>
<dbReference type="HAMAP" id="MF_01363">
    <property type="entry name" value="Ribosomal_bL21"/>
    <property type="match status" value="1"/>
</dbReference>
<dbReference type="InterPro" id="IPR028909">
    <property type="entry name" value="bL21-like"/>
</dbReference>
<dbReference type="InterPro" id="IPR036164">
    <property type="entry name" value="bL21-like_sf"/>
</dbReference>
<dbReference type="InterPro" id="IPR001787">
    <property type="entry name" value="Ribosomal_bL21"/>
</dbReference>
<dbReference type="NCBIfam" id="TIGR00061">
    <property type="entry name" value="L21"/>
    <property type="match status" value="1"/>
</dbReference>
<dbReference type="PANTHER" id="PTHR21349">
    <property type="entry name" value="50S RIBOSOMAL PROTEIN L21"/>
    <property type="match status" value="1"/>
</dbReference>
<dbReference type="PANTHER" id="PTHR21349:SF0">
    <property type="entry name" value="LARGE RIBOSOMAL SUBUNIT PROTEIN BL21M"/>
    <property type="match status" value="1"/>
</dbReference>
<dbReference type="Pfam" id="PF00829">
    <property type="entry name" value="Ribosomal_L21p"/>
    <property type="match status" value="1"/>
</dbReference>
<dbReference type="SUPFAM" id="SSF141091">
    <property type="entry name" value="L21p-like"/>
    <property type="match status" value="1"/>
</dbReference>
<evidence type="ECO:0000255" key="1">
    <source>
        <dbReference type="HAMAP-Rule" id="MF_01363"/>
    </source>
</evidence>
<evidence type="ECO:0000305" key="2"/>
<reference key="1">
    <citation type="journal article" date="2005" name="DNA Res.">
        <title>Complete genome sequence of the facultative anaerobic magnetotactic bacterium Magnetospirillum sp. strain AMB-1.</title>
        <authorList>
            <person name="Matsunaga T."/>
            <person name="Okamura Y."/>
            <person name="Fukuda Y."/>
            <person name="Wahyudi A.T."/>
            <person name="Murase Y."/>
            <person name="Takeyama H."/>
        </authorList>
    </citation>
    <scope>NUCLEOTIDE SEQUENCE [LARGE SCALE GENOMIC DNA]</scope>
    <source>
        <strain>ATCC 700264 / AMB-1</strain>
    </source>
</reference>